<reference key="1">
    <citation type="journal article" date="2008" name="Int. J. Med. Microbiol.">
        <title>Trichophyton rubrum secreted and membrane-associated carboxypeptidases.</title>
        <authorList>
            <person name="Zaugg C."/>
            <person name="Jousson O."/>
            <person name="Lechenne B."/>
            <person name="Staib P."/>
            <person name="Monod M."/>
        </authorList>
    </citation>
    <scope>NUCLEOTIDE SEQUENCE [GENOMIC DNA]</scope>
    <scope>FUNCTION</scope>
    <scope>BIOPHYSICOCHEMICAL PROPERTIES</scope>
</reference>
<evidence type="ECO:0000250" key="1"/>
<evidence type="ECO:0000255" key="2"/>
<evidence type="ECO:0000255" key="3">
    <source>
        <dbReference type="PROSITE-ProRule" id="PRU10074"/>
    </source>
</evidence>
<evidence type="ECO:0000256" key="4">
    <source>
        <dbReference type="SAM" id="MobiDB-lite"/>
    </source>
</evidence>
<evidence type="ECO:0000269" key="5">
    <source>
    </source>
</evidence>
<evidence type="ECO:0000305" key="6"/>
<organism>
    <name type="scientific">Trichophyton rubrum</name>
    <name type="common">Athlete's foot fungus</name>
    <name type="synonym">Epidermophyton rubrum</name>
    <dbReference type="NCBI Taxonomy" id="5551"/>
    <lineage>
        <taxon>Eukaryota</taxon>
        <taxon>Fungi</taxon>
        <taxon>Dikarya</taxon>
        <taxon>Ascomycota</taxon>
        <taxon>Pezizomycotina</taxon>
        <taxon>Eurotiomycetes</taxon>
        <taxon>Eurotiomycetidae</taxon>
        <taxon>Onygenales</taxon>
        <taxon>Arthrodermataceae</taxon>
        <taxon>Trichophyton</taxon>
    </lineage>
</organism>
<keyword id="KW-0121">Carboxypeptidase</keyword>
<keyword id="KW-1003">Cell membrane</keyword>
<keyword id="KW-1015">Disulfide bond</keyword>
<keyword id="KW-0325">Glycoprotein</keyword>
<keyword id="KW-0336">GPI-anchor</keyword>
<keyword id="KW-0378">Hydrolase</keyword>
<keyword id="KW-0449">Lipoprotein</keyword>
<keyword id="KW-0472">Membrane</keyword>
<keyword id="KW-0645">Protease</keyword>
<keyword id="KW-0732">Signal</keyword>
<keyword id="KW-0843">Virulence</keyword>
<protein>
    <recommendedName>
        <fullName>Carboxypeptidase S1 homolog A</fullName>
        <ecNumber>3.4.16.6</ecNumber>
    </recommendedName>
    <alternativeName>
        <fullName>Serine carboxypeptidase A</fullName>
        <shortName>SPCA</shortName>
    </alternativeName>
</protein>
<gene>
    <name type="primary">SCPA</name>
</gene>
<dbReference type="EC" id="3.4.16.6"/>
<dbReference type="EMBL" id="AY497023">
    <property type="protein sequence ID" value="AAS76667.1"/>
    <property type="molecule type" value="Genomic_DNA"/>
</dbReference>
<dbReference type="SMR" id="Q5J6J1"/>
<dbReference type="ESTHER" id="triru-SPCA">
    <property type="family name" value="Carboxypeptidase_S10"/>
</dbReference>
<dbReference type="MEROPS" id="S10.016"/>
<dbReference type="GlyCosmos" id="Q5J6J1">
    <property type="glycosylation" value="13 sites, No reported glycans"/>
</dbReference>
<dbReference type="VEuPathDB" id="FungiDB:TERG_04022"/>
<dbReference type="GO" id="GO:0000324">
    <property type="term" value="C:fungal-type vacuole"/>
    <property type="evidence" value="ECO:0007669"/>
    <property type="project" value="TreeGrafter"/>
</dbReference>
<dbReference type="GO" id="GO:0005886">
    <property type="term" value="C:plasma membrane"/>
    <property type="evidence" value="ECO:0007669"/>
    <property type="project" value="UniProtKB-SubCell"/>
</dbReference>
<dbReference type="GO" id="GO:0098552">
    <property type="term" value="C:side of membrane"/>
    <property type="evidence" value="ECO:0007669"/>
    <property type="project" value="UniProtKB-KW"/>
</dbReference>
<dbReference type="GO" id="GO:0004185">
    <property type="term" value="F:serine-type carboxypeptidase activity"/>
    <property type="evidence" value="ECO:0007669"/>
    <property type="project" value="UniProtKB-EC"/>
</dbReference>
<dbReference type="GO" id="GO:0006508">
    <property type="term" value="P:proteolysis"/>
    <property type="evidence" value="ECO:0007669"/>
    <property type="project" value="UniProtKB-KW"/>
</dbReference>
<dbReference type="Gene3D" id="3.40.50.1820">
    <property type="entry name" value="alpha/beta hydrolase"/>
    <property type="match status" value="1"/>
</dbReference>
<dbReference type="InterPro" id="IPR029058">
    <property type="entry name" value="AB_hydrolase_fold"/>
</dbReference>
<dbReference type="InterPro" id="IPR001563">
    <property type="entry name" value="Peptidase_S10"/>
</dbReference>
<dbReference type="InterPro" id="IPR018202">
    <property type="entry name" value="Ser_caboxypep_ser_AS"/>
</dbReference>
<dbReference type="PANTHER" id="PTHR11802:SF189">
    <property type="entry name" value="CARBOXYPEPTIDASE"/>
    <property type="match status" value="1"/>
</dbReference>
<dbReference type="PANTHER" id="PTHR11802">
    <property type="entry name" value="SERINE PROTEASE FAMILY S10 SERINE CARBOXYPEPTIDASE"/>
    <property type="match status" value="1"/>
</dbReference>
<dbReference type="Pfam" id="PF00450">
    <property type="entry name" value="Peptidase_S10"/>
    <property type="match status" value="1"/>
</dbReference>
<dbReference type="PRINTS" id="PR00724">
    <property type="entry name" value="CRBOXYPTASEC"/>
</dbReference>
<dbReference type="SUPFAM" id="SSF53474">
    <property type="entry name" value="alpha/beta-Hydrolases"/>
    <property type="match status" value="1"/>
</dbReference>
<dbReference type="PROSITE" id="PS00131">
    <property type="entry name" value="CARBOXYPEPT_SER_SER"/>
    <property type="match status" value="1"/>
</dbReference>
<proteinExistence type="evidence at protein level"/>
<feature type="signal peptide" evidence="2">
    <location>
        <begin position="1"/>
        <end position="19"/>
    </location>
</feature>
<feature type="chain" id="PRO_0000384117" description="Carboxypeptidase S1 homolog A">
    <location>
        <begin position="20"/>
        <end position="629"/>
    </location>
</feature>
<feature type="propeptide" id="PRO_0000384118" description="Removed in mature form" evidence="2">
    <location>
        <begin position="630"/>
        <end position="652"/>
    </location>
</feature>
<feature type="region of interest" description="Disordered" evidence="4">
    <location>
        <begin position="608"/>
        <end position="627"/>
    </location>
</feature>
<feature type="compositionally biased region" description="Low complexity" evidence="4">
    <location>
        <begin position="618"/>
        <end position="627"/>
    </location>
</feature>
<feature type="active site" evidence="3">
    <location>
        <position position="238"/>
    </location>
</feature>
<feature type="active site" evidence="3">
    <location>
        <position position="458"/>
    </location>
</feature>
<feature type="active site" evidence="3">
    <location>
        <position position="516"/>
    </location>
</feature>
<feature type="binding site" evidence="1">
    <location>
        <position position="461"/>
    </location>
    <ligand>
        <name>substrate</name>
    </ligand>
</feature>
<feature type="binding site" evidence="1">
    <location>
        <position position="517"/>
    </location>
    <ligand>
        <name>substrate</name>
    </ligand>
</feature>
<feature type="lipid moiety-binding region" description="GPI-anchor amidated glycine" evidence="2">
    <location>
        <position position="629"/>
    </location>
</feature>
<feature type="glycosylation site" description="N-linked (GlcNAc...) asparagine" evidence="2">
    <location>
        <position position="77"/>
    </location>
</feature>
<feature type="glycosylation site" description="N-linked (GlcNAc...) asparagine" evidence="2">
    <location>
        <position position="132"/>
    </location>
</feature>
<feature type="glycosylation site" description="N-linked (GlcNAc...) asparagine" evidence="2">
    <location>
        <position position="161"/>
    </location>
</feature>
<feature type="glycosylation site" description="N-linked (GlcNAc...) asparagine" evidence="2">
    <location>
        <position position="168"/>
    </location>
</feature>
<feature type="glycosylation site" description="N-linked (GlcNAc...) asparagine" evidence="2">
    <location>
        <position position="184"/>
    </location>
</feature>
<feature type="glycosylation site" description="N-linked (GlcNAc...) asparagine" evidence="2">
    <location>
        <position position="202"/>
    </location>
</feature>
<feature type="glycosylation site" description="N-linked (GlcNAc...) asparagine" evidence="2">
    <location>
        <position position="260"/>
    </location>
</feature>
<feature type="glycosylation site" description="N-linked (GlcNAc...) asparagine" evidence="2">
    <location>
        <position position="299"/>
    </location>
</feature>
<feature type="glycosylation site" description="N-linked (GlcNAc...) asparagine" evidence="2">
    <location>
        <position position="347"/>
    </location>
</feature>
<feature type="glycosylation site" description="N-linked (GlcNAc...) asparagine" evidence="2">
    <location>
        <position position="410"/>
    </location>
</feature>
<feature type="glycosylation site" description="N-linked (GlcNAc...) asparagine" evidence="2">
    <location>
        <position position="474"/>
    </location>
</feature>
<feature type="glycosylation site" description="N-linked (GlcNAc...) asparagine" evidence="2">
    <location>
        <position position="492"/>
    </location>
</feature>
<feature type="glycosylation site" description="N-linked (GlcNAc...) asparagine" evidence="2">
    <location>
        <position position="505"/>
    </location>
</feature>
<feature type="disulfide bond" evidence="1">
    <location>
        <begin position="50"/>
        <end position="121"/>
    </location>
</feature>
<feature type="disulfide bond" evidence="1">
    <location>
        <begin position="325"/>
        <end position="361"/>
    </location>
</feature>
<feature type="disulfide bond" evidence="1">
    <location>
        <begin position="332"/>
        <end position="354"/>
    </location>
</feature>
<comment type="function">
    <text evidence="1 5">Extracellular serine carboxypeptidase that contributes to pathogenicity.</text>
</comment>
<comment type="catalytic activity">
    <reaction>
        <text>Preferential release of a C-terminal arginine or lysine residue.</text>
        <dbReference type="EC" id="3.4.16.6"/>
    </reaction>
</comment>
<comment type="biophysicochemical properties">
    <phDependence>
        <text evidence="5">Optimum pH is 4.5.</text>
    </phDependence>
</comment>
<comment type="subcellular location">
    <subcellularLocation>
        <location evidence="6">Cell membrane</location>
        <topology evidence="6">Lipid-anchor</topology>
        <topology evidence="6">GPI-anchor</topology>
    </subcellularLocation>
</comment>
<comment type="similarity">
    <text evidence="6">Belongs to the peptidase S10 family.</text>
</comment>
<sequence length="652" mass="71825">MRFAASIAVALPVIHAASAQGFPPPVKGVTVVKSKFDENVKITYKENDICETTQGVRSFTGHVHLPPDNDDFGVYRNYSINTFFWFFEAREDPKNAPLSIWLNGGPGSSSMIGLFQENGPCWVNEDSKSTTNNSFSWNNKVNMLYIDQPNQVGFSYDVPTNITYSTINDTISVADFSNGVPAQNLSTLVGTGSSQNPWATANNTVNAARSIWHFAQVWFQEFPEHKPNNNKISIWTESYGGRYGPSFASYFQEQNEKIKNHTITEEGEMHILNLDTLGIINGCIDLMFQAESYAEFPYNNTYGIKAYTKEKRDAILHDIHRPDGCFDKVTKCREAAKEGDPHFYSNNATVNTICADANSACDKYLMDPFQETNLGYYDIAHPLQDPFPPPFYKGFLSQSSVLSDMGSPVNFSQYAQAVGKSFHGVGDYARPDVRGFTGDIAYLLESGVKVALVYGDRDYICNWFGGEQVSLGLNYTGTQDFHRAKYADVKVNSSYVGGVVRQHGNFSFTRVFEAGHEVPGYQPETALKIFERIMFNKDISTGEIDIAQKPDYGTTGTESTFHIKNDIPPSPEPTCYLLSADGTCTPEQLNAIKDGTAVVENYIIKSPAASKGNPPPTTTSSPTAAPTAGSAMLKAPVAMLAISALTVLAFFL</sequence>
<accession>Q5J6J1</accession>
<name>SPCA_TRIRU</name>